<accession>O78482</accession>
<geneLocation type="chloroplast"/>
<proteinExistence type="inferred from homology"/>
<comment type="subcellular location">
    <subcellularLocation>
        <location>Plastid</location>
        <location>Chloroplast</location>
    </subcellularLocation>
</comment>
<comment type="similarity">
    <text evidence="1">Belongs to the universal ribosomal protein uS2 family.</text>
</comment>
<gene>
    <name type="primary">rps2</name>
</gene>
<feature type="chain" id="PRO_0000134298" description="Small ribosomal subunit protein uS2c">
    <location>
        <begin position="1"/>
        <end position="235"/>
    </location>
</feature>
<sequence length="235" mass="26713">MTITLAELLESGVHFGHQARRWNPKMFPYIYAERNGIHIIDLVQTAQLLTEACEFVKKSAEEGKKFLFVGTKRQAASIIAQEAERCGAFYINQRWLGGILTNWFTIRTRVERLKDLELKEETGYLDKLPKKEAAGLRRELEKLKRNLNGIKNMKRLPDLVVIVDQKRETTAVQECRTLGIPIISILDTNCNPDLTDIAIPGNDDAIRSIKLIITKLTDSICEGSLGYDENNSDHE</sequence>
<protein>
    <recommendedName>
        <fullName evidence="1">Small ribosomal subunit protein uS2c</fullName>
    </recommendedName>
    <alternativeName>
        <fullName>30S ribosomal protein S2, chloroplastic</fullName>
    </alternativeName>
</protein>
<keyword id="KW-0150">Chloroplast</keyword>
<keyword id="KW-0934">Plastid</keyword>
<keyword id="KW-0687">Ribonucleoprotein</keyword>
<keyword id="KW-0689">Ribosomal protein</keyword>
<organism>
    <name type="scientific">Guillardia theta</name>
    <name type="common">Cryptophyte</name>
    <name type="synonym">Cryptomonas phi</name>
    <dbReference type="NCBI Taxonomy" id="55529"/>
    <lineage>
        <taxon>Eukaryota</taxon>
        <taxon>Cryptophyceae</taxon>
        <taxon>Pyrenomonadales</taxon>
        <taxon>Geminigeraceae</taxon>
        <taxon>Guillardia</taxon>
    </lineage>
</organism>
<reference key="1">
    <citation type="journal article" date="1999" name="J. Mol. Evol.">
        <title>The plastid genome of the cryptophyte alga, Guillardia theta: complete sequence and conserved synteny groups confirm its common ancestry with red algae.</title>
        <authorList>
            <person name="Douglas S.E."/>
            <person name="Penny S.L."/>
        </authorList>
    </citation>
    <scope>NUCLEOTIDE SEQUENCE [LARGE SCALE GENOMIC DNA]</scope>
</reference>
<evidence type="ECO:0000305" key="1"/>
<name>RR2_GUITH</name>
<dbReference type="EMBL" id="AF041468">
    <property type="protein sequence ID" value="AAC35673.1"/>
    <property type="molecule type" value="Genomic_DNA"/>
</dbReference>
<dbReference type="RefSeq" id="NP_050739.1">
    <property type="nucleotide sequence ID" value="NC_000926.1"/>
</dbReference>
<dbReference type="SMR" id="O78482"/>
<dbReference type="GeneID" id="857044"/>
<dbReference type="HOGENOM" id="CLU_040318_1_2_1"/>
<dbReference type="OMA" id="MSVTMRQ"/>
<dbReference type="GO" id="GO:0009507">
    <property type="term" value="C:chloroplast"/>
    <property type="evidence" value="ECO:0007669"/>
    <property type="project" value="UniProtKB-SubCell"/>
</dbReference>
<dbReference type="GO" id="GO:0005763">
    <property type="term" value="C:mitochondrial small ribosomal subunit"/>
    <property type="evidence" value="ECO:0007669"/>
    <property type="project" value="TreeGrafter"/>
</dbReference>
<dbReference type="GO" id="GO:0003735">
    <property type="term" value="F:structural constituent of ribosome"/>
    <property type="evidence" value="ECO:0007669"/>
    <property type="project" value="InterPro"/>
</dbReference>
<dbReference type="GO" id="GO:0006412">
    <property type="term" value="P:translation"/>
    <property type="evidence" value="ECO:0007669"/>
    <property type="project" value="UniProtKB-UniRule"/>
</dbReference>
<dbReference type="CDD" id="cd01425">
    <property type="entry name" value="RPS2"/>
    <property type="match status" value="1"/>
</dbReference>
<dbReference type="FunFam" id="1.10.287.610:FF:000001">
    <property type="entry name" value="30S ribosomal protein S2"/>
    <property type="match status" value="1"/>
</dbReference>
<dbReference type="Gene3D" id="3.40.50.10490">
    <property type="entry name" value="Glucose-6-phosphate isomerase like protein, domain 1"/>
    <property type="match status" value="1"/>
</dbReference>
<dbReference type="Gene3D" id="1.10.287.610">
    <property type="entry name" value="Helix hairpin bin"/>
    <property type="match status" value="1"/>
</dbReference>
<dbReference type="HAMAP" id="MF_00291_B">
    <property type="entry name" value="Ribosomal_uS2_B"/>
    <property type="match status" value="1"/>
</dbReference>
<dbReference type="InterPro" id="IPR001865">
    <property type="entry name" value="Ribosomal_uS2"/>
</dbReference>
<dbReference type="InterPro" id="IPR005706">
    <property type="entry name" value="Ribosomal_uS2_bac/mit/plastid"/>
</dbReference>
<dbReference type="InterPro" id="IPR018130">
    <property type="entry name" value="Ribosomal_uS2_CS"/>
</dbReference>
<dbReference type="InterPro" id="IPR023591">
    <property type="entry name" value="Ribosomal_uS2_flav_dom_sf"/>
</dbReference>
<dbReference type="NCBIfam" id="TIGR01011">
    <property type="entry name" value="rpsB_bact"/>
    <property type="match status" value="1"/>
</dbReference>
<dbReference type="PANTHER" id="PTHR12534">
    <property type="entry name" value="30S RIBOSOMAL PROTEIN S2 PROKARYOTIC AND ORGANELLAR"/>
    <property type="match status" value="1"/>
</dbReference>
<dbReference type="PANTHER" id="PTHR12534:SF0">
    <property type="entry name" value="SMALL RIBOSOMAL SUBUNIT PROTEIN US2M"/>
    <property type="match status" value="1"/>
</dbReference>
<dbReference type="Pfam" id="PF00318">
    <property type="entry name" value="Ribosomal_S2"/>
    <property type="match status" value="1"/>
</dbReference>
<dbReference type="PRINTS" id="PR00395">
    <property type="entry name" value="RIBOSOMALS2"/>
</dbReference>
<dbReference type="SUPFAM" id="SSF52313">
    <property type="entry name" value="Ribosomal protein S2"/>
    <property type="match status" value="1"/>
</dbReference>
<dbReference type="PROSITE" id="PS00962">
    <property type="entry name" value="RIBOSOMAL_S2_1"/>
    <property type="match status" value="1"/>
</dbReference>
<dbReference type="PROSITE" id="PS00963">
    <property type="entry name" value="RIBOSOMAL_S2_2"/>
    <property type="match status" value="1"/>
</dbReference>